<feature type="signal peptide" evidence="1">
    <location>
        <begin position="1"/>
        <end position="20"/>
    </location>
</feature>
<feature type="propeptide" id="PRO_0000452539" evidence="8">
    <location>
        <begin position="21"/>
        <end position="87"/>
    </location>
</feature>
<feature type="chain" id="PRO_5018055760" description="U-Kazal-Dg21.2" evidence="4">
    <location>
        <begin position="88"/>
        <end position="142"/>
    </location>
</feature>
<feature type="propeptide" id="PRO_0000452540" evidence="7">
    <location>
        <begin position="142"/>
        <end position="202"/>
    </location>
</feature>
<feature type="domain" description="Kazal-like 1" evidence="3">
    <location>
        <begin position="23"/>
        <end position="77"/>
    </location>
</feature>
<feature type="domain" description="Kazal-like 2" evidence="3">
    <location>
        <begin position="85"/>
        <end position="140"/>
    </location>
</feature>
<feature type="domain" description="Kazal-like 3" evidence="3">
    <location>
        <begin position="148"/>
        <end position="202"/>
    </location>
</feature>
<feature type="site" description="Reactive bond" evidence="3">
    <location>
        <begin position="35"/>
        <end position="36"/>
    </location>
</feature>
<feature type="site" description="Reactive bond" evidence="3">
    <location>
        <begin position="97"/>
        <end position="98"/>
    </location>
</feature>
<feature type="site" description="Reactive bond" evidence="3">
    <location>
        <begin position="160"/>
        <end position="161"/>
    </location>
</feature>
<feature type="glycosylation site" description="N-linked (GlcNAc...) asparagine" evidence="2">
    <location>
        <position position="140"/>
    </location>
</feature>
<feature type="glycosylation site" description="N-linked (GlcNAc...) asparagine" evidence="2">
    <location>
        <position position="193"/>
    </location>
</feature>
<feature type="disulfide bond" evidence="3">
    <location>
        <begin position="29"/>
        <end position="62"/>
    </location>
</feature>
<feature type="disulfide bond" evidence="3">
    <location>
        <begin position="33"/>
        <end position="55"/>
    </location>
</feature>
<feature type="disulfide bond" evidence="3">
    <location>
        <begin position="91"/>
        <end position="124"/>
    </location>
</feature>
<feature type="disulfide bond" evidence="3">
    <location>
        <begin position="95"/>
        <end position="117"/>
    </location>
</feature>
<feature type="disulfide bond" evidence="3">
    <location>
        <begin position="103"/>
        <end position="138"/>
    </location>
</feature>
<feature type="disulfide bond" evidence="3">
    <location>
        <begin position="154"/>
        <end position="187"/>
    </location>
</feature>
<feature type="disulfide bond" evidence="3">
    <location>
        <begin position="158"/>
        <end position="180"/>
    </location>
</feature>
<feature type="disulfide bond" evidence="3">
    <location>
        <begin position="166"/>
        <end position="202"/>
    </location>
</feature>
<accession>A0A3G5BID2</accession>
<protein>
    <recommendedName>
        <fullName evidence="6">U-Kazal-Dg21.2</fullName>
    </recommendedName>
</protein>
<proteinExistence type="evidence at protein level"/>
<dbReference type="EMBL" id="MK075139">
    <property type="protein sequence ID" value="AYV99542.1"/>
    <property type="molecule type" value="mRNA"/>
</dbReference>
<dbReference type="GO" id="GO:0005576">
    <property type="term" value="C:extracellular region"/>
    <property type="evidence" value="ECO:0007669"/>
    <property type="project" value="UniProtKB-SubCell"/>
</dbReference>
<dbReference type="GO" id="GO:0004867">
    <property type="term" value="F:serine-type endopeptidase inhibitor activity"/>
    <property type="evidence" value="ECO:0007669"/>
    <property type="project" value="UniProtKB-KW"/>
</dbReference>
<dbReference type="CDD" id="cd00104">
    <property type="entry name" value="KAZAL_FS"/>
    <property type="match status" value="1"/>
</dbReference>
<dbReference type="Gene3D" id="3.30.60.30">
    <property type="match status" value="3"/>
</dbReference>
<dbReference type="InterPro" id="IPR002350">
    <property type="entry name" value="Kazal_dom"/>
</dbReference>
<dbReference type="InterPro" id="IPR036058">
    <property type="entry name" value="Kazal_dom_sf"/>
</dbReference>
<dbReference type="InterPro" id="IPR050653">
    <property type="entry name" value="Prot_Inhib_GrowthFact_Antg"/>
</dbReference>
<dbReference type="PANTHER" id="PTHR10913:SF45">
    <property type="entry name" value="FOLLISTATIN, ISOFORM A-RELATED"/>
    <property type="match status" value="1"/>
</dbReference>
<dbReference type="PANTHER" id="PTHR10913">
    <property type="entry name" value="FOLLISTATIN-RELATED"/>
    <property type="match status" value="1"/>
</dbReference>
<dbReference type="Pfam" id="PF00050">
    <property type="entry name" value="Kazal_1"/>
    <property type="match status" value="1"/>
</dbReference>
<dbReference type="Pfam" id="PF07648">
    <property type="entry name" value="Kazal_2"/>
    <property type="match status" value="2"/>
</dbReference>
<dbReference type="SMART" id="SM00280">
    <property type="entry name" value="KAZAL"/>
    <property type="match status" value="3"/>
</dbReference>
<dbReference type="SUPFAM" id="SSF100895">
    <property type="entry name" value="Kazal-type serine protease inhibitors"/>
    <property type="match status" value="3"/>
</dbReference>
<dbReference type="PROSITE" id="PS51465">
    <property type="entry name" value="KAZAL_2"/>
    <property type="match status" value="3"/>
</dbReference>
<name>KAZL2_DOLGE</name>
<reference key="1">
    <citation type="journal article" date="2018" name="Toxins">
        <title>Buzz kill: function and proteomic composition of venom from the giant assassin fly Dolopus genitalis (Diptera: Asilidae).</title>
        <authorList>
            <person name="Walker A.A."/>
            <person name="Dobson J."/>
            <person name="Jin J."/>
            <person name="Robinson S.D."/>
            <person name="Herzig V."/>
            <person name="Vetter I."/>
            <person name="King G.F."/>
            <person name="Fry B.G."/>
        </authorList>
    </citation>
    <scope>NUCLEOTIDE SEQUENCE [MRNA]</scope>
    <scope>DETECTION IN VENOM</scope>
    <source>
        <tissue>Venom gland</tissue>
    </source>
</reference>
<reference key="2">
    <citation type="journal article" date="2020" name="Insect Biochem. Mol. Biol.">
        <title>Weaponisation 'on the fly': convergent recruitment of knottin and defensin peptide scaffolds into the venom of predatory assassin flies.</title>
        <authorList>
            <person name="Jin J."/>
            <person name="Agwa A.J."/>
            <person name="Szanto T.G."/>
            <person name="Csoti A."/>
            <person name="Panyi G."/>
            <person name="Schroeder C.I."/>
            <person name="Walker A.A."/>
            <person name="King G.F."/>
        </authorList>
    </citation>
    <scope>FUNCTION</scope>
    <scope>MASS SPECTROMETRY</scope>
    <scope>RECOMBINANT EXPRESSION</scope>
    <scope>SUBCELLULAR LOCATION</scope>
    <source>
        <tissue>Venom</tissue>
    </source>
</reference>
<evidence type="ECO:0000255" key="1"/>
<evidence type="ECO:0000255" key="2">
    <source>
        <dbReference type="PROSITE-ProRule" id="PRU00498"/>
    </source>
</evidence>
<evidence type="ECO:0000255" key="3">
    <source>
        <dbReference type="PROSITE-ProRule" id="PRU00798"/>
    </source>
</evidence>
<evidence type="ECO:0000269" key="4">
    <source>
    </source>
</evidence>
<evidence type="ECO:0000269" key="5">
    <source>
    </source>
</evidence>
<evidence type="ECO:0000303" key="6">
    <source>
    </source>
</evidence>
<evidence type="ECO:0000305" key="7"/>
<evidence type="ECO:0000305" key="8">
    <source>
    </source>
</evidence>
<evidence type="ECO:0000305" key="9">
    <source>
    </source>
</evidence>
<comment type="function">
    <text evidence="5 7">May act as a serine protease inhibitor, since it possess the kazal serine protease inhibitor signature (Probable). The recombinant peptide does not produce toxic effects on insects (PubMed:31870846).</text>
</comment>
<comment type="subcellular location">
    <subcellularLocation>
        <location evidence="5">Secreted</location>
    </subcellularLocation>
</comment>
<comment type="tissue specificity">
    <text evidence="9">Expressed by the venom gland.</text>
</comment>
<comment type="mass spectrometry">
    <text>Monoisotopic mass.</text>
</comment>
<comment type="miscellaneous">
    <text evidence="8">The peptide presented here consists of a single Kazal domain but is suggested to be derived from a multidomain Kazal protein after proteolytic cleavage.</text>
</comment>
<organism>
    <name type="scientific">Dolopus genitalis</name>
    <name type="common">Giant Australian assassin fly</name>
    <name type="synonym">Asilus genitalis</name>
    <dbReference type="NCBI Taxonomy" id="2488630"/>
    <lineage>
        <taxon>Eukaryota</taxon>
        <taxon>Metazoa</taxon>
        <taxon>Ecdysozoa</taxon>
        <taxon>Arthropoda</taxon>
        <taxon>Hexapoda</taxon>
        <taxon>Insecta</taxon>
        <taxon>Pterygota</taxon>
        <taxon>Neoptera</taxon>
        <taxon>Endopterygota</taxon>
        <taxon>Diptera</taxon>
        <taxon>Brachycera</taxon>
        <taxon>Muscomorpha</taxon>
        <taxon>Asiloidea</taxon>
        <taxon>Asilidae</taxon>
        <taxon>Asilinae</taxon>
        <taxon>Dolopus</taxon>
    </lineage>
</organism>
<keyword id="KW-1015">Disulfide bond</keyword>
<keyword id="KW-0325">Glycoprotein</keyword>
<keyword id="KW-0646">Protease inhibitor</keyword>
<keyword id="KW-0677">Repeat</keyword>
<keyword id="KW-0964">Secreted</keyword>
<keyword id="KW-0722">Serine protease inhibitor</keyword>
<keyword id="KW-0732">Signal</keyword>
<sequence>MKYFLWSAVTIFAIVNVVGAKNSDFDPRCLRACTAIYRPVCGFDGKQYRIFASECVMAFENCNLLLKSQKAFQKTLMSFCQVEEDFDSDFCPEVCPLLYKPVCGSYGDIKKIFPNECELKRANCKFGEAWEKINMDICRNISFKSELIDPKKKCLKPCNLNWDPICAFDGEKYFTFGNRCDMEIQTCLRSEKNWTLIRKGEC</sequence>